<comment type="function">
    <text evidence="1">Is able to catalyze the biosynthesis of dTMP using dUMP, tetrahydrofolate and formaldehyde in vitro, i.e. a reaction equivalent to that catalyzed by bacterial thymidylate synthases (EC 2.1.1.45). However, M.jannaschii like most methanogenic Archaea lacks folates, thus the physiological cosubstrate is unknown but is likely one of the non-methylated methanopterin biosynthetic intermediates.</text>
</comment>
<comment type="pathway">
    <text>Pyrimidine metabolism; dTTP biosynthesis.</text>
</comment>
<keyword id="KW-0489">Methyltransferase</keyword>
<keyword id="KW-0545">Nucleotide biosynthesis</keyword>
<keyword id="KW-1185">Reference proteome</keyword>
<keyword id="KW-0808">Transferase</keyword>
<proteinExistence type="evidence at protein level"/>
<organism>
    <name type="scientific">Methanocaldococcus jannaschii (strain ATCC 43067 / DSM 2661 / JAL-1 / JCM 10045 / NBRC 100440)</name>
    <name type="common">Methanococcus jannaschii</name>
    <dbReference type="NCBI Taxonomy" id="243232"/>
    <lineage>
        <taxon>Archaea</taxon>
        <taxon>Methanobacteriati</taxon>
        <taxon>Methanobacteriota</taxon>
        <taxon>Methanomada group</taxon>
        <taxon>Methanococci</taxon>
        <taxon>Methanococcales</taxon>
        <taxon>Methanocaldococcaceae</taxon>
        <taxon>Methanocaldococcus</taxon>
    </lineage>
</organism>
<reference key="1">
    <citation type="journal article" date="1996" name="Science">
        <title>Complete genome sequence of the methanogenic archaeon, Methanococcus jannaschii.</title>
        <authorList>
            <person name="Bult C.J."/>
            <person name="White O."/>
            <person name="Olsen G.J."/>
            <person name="Zhou L."/>
            <person name="Fleischmann R.D."/>
            <person name="Sutton G.G."/>
            <person name="Blake J.A."/>
            <person name="FitzGerald L.M."/>
            <person name="Clayton R.A."/>
            <person name="Gocayne J.D."/>
            <person name="Kerlavage A.R."/>
            <person name="Dougherty B.A."/>
            <person name="Tomb J.-F."/>
            <person name="Adams M.D."/>
            <person name="Reich C.I."/>
            <person name="Overbeek R."/>
            <person name="Kirkness E.F."/>
            <person name="Weinstock K.G."/>
            <person name="Merrick J.M."/>
            <person name="Glodek A."/>
            <person name="Scott J.L."/>
            <person name="Geoghagen N.S.M."/>
            <person name="Weidman J.F."/>
            <person name="Fuhrmann J.L."/>
            <person name="Nguyen D."/>
            <person name="Utterback T.R."/>
            <person name="Kelley J.M."/>
            <person name="Peterson J.D."/>
            <person name="Sadow P.W."/>
            <person name="Hanna M.C."/>
            <person name="Cotton M.D."/>
            <person name="Roberts K.M."/>
            <person name="Hurst M.A."/>
            <person name="Kaine B.P."/>
            <person name="Borodovsky M."/>
            <person name="Klenk H.-P."/>
            <person name="Fraser C.M."/>
            <person name="Smith H.O."/>
            <person name="Woese C.R."/>
            <person name="Venter J.C."/>
        </authorList>
    </citation>
    <scope>NUCLEOTIDE SEQUENCE [LARGE SCALE GENOMIC DNA]</scope>
    <source>
        <strain>ATCC 43067 / DSM 2661 / JAL-1 / JCM 10045 / NBRC 100440</strain>
    </source>
</reference>
<reference key="2">
    <citation type="journal article" date="1999" name="Nat. Struct. Biol.">
        <title>Identifying two ancient enzymes in Archaea using predicted secondary structure alignment.</title>
        <authorList>
            <person name="Xu H."/>
            <person name="Aurora R."/>
            <person name="Rose G.D."/>
            <person name="White R.H."/>
        </authorList>
    </citation>
    <scope>FUNCTION AS A THYMIDYLATE SYNTHASE</scope>
    <source>
        <strain>ATCC 43067 / DSM 2661 / JAL-1 / JCM 10045 / NBRC 100440</strain>
    </source>
</reference>
<evidence type="ECO:0000269" key="1">
    <source>
    </source>
</evidence>
<gene>
    <name type="ordered locus">MJ0757</name>
</gene>
<sequence>MVLNINSFYKNCRGEFMRAVFIYHKNNQRMEKFYKNLLNEPDFCRICDDCYNCRGNWTFKNNVKNIVIEEVYEEFVDNPYDYLPELPEGDICIAQLHEDLLYELPLLLKEKGYKALIVPSETPHDLSLALRRDLKRVCSNYNIEFENPKPFCSLEKKEGNEYINKFIDYFKIGKPELEIEVENGLIKDVKVKISAPCGETYYIAKRLKGKAIDDLKEEIANAHHNYPCLASMEMDKELGDTILHKAGYIAFEVVEKALKK</sequence>
<protein>
    <recommendedName>
        <fullName>Thymidylate synthase</fullName>
        <shortName>TS</shortName>
        <shortName>TSase</shortName>
        <ecNumber>2.1.1.-</ecNumber>
    </recommendedName>
</protein>
<dbReference type="EC" id="2.1.1.-"/>
<dbReference type="EMBL" id="L77117">
    <property type="protein sequence ID" value="AAB98749.1"/>
    <property type="molecule type" value="Genomic_DNA"/>
</dbReference>
<dbReference type="PIR" id="E64394">
    <property type="entry name" value="E64394"/>
</dbReference>
<dbReference type="STRING" id="243232.MJ_0757"/>
<dbReference type="PaxDb" id="243232-MJ_0757"/>
<dbReference type="DNASU" id="1451634"/>
<dbReference type="EnsemblBacteria" id="AAB98749">
    <property type="protein sequence ID" value="AAB98749"/>
    <property type="gene ID" value="MJ_0757"/>
</dbReference>
<dbReference type="KEGG" id="mja:MJ_0757"/>
<dbReference type="eggNOG" id="arCOG02468">
    <property type="taxonomic scope" value="Archaea"/>
</dbReference>
<dbReference type="HOGENOM" id="CLU_077076_0_0_2"/>
<dbReference type="InParanoid" id="Q58167"/>
<dbReference type="PhylomeDB" id="Q58167"/>
<dbReference type="BioCyc" id="MetaCyc:MONOMER-14571"/>
<dbReference type="UniPathway" id="UPA00575"/>
<dbReference type="Proteomes" id="UP000000805">
    <property type="component" value="Chromosome"/>
</dbReference>
<dbReference type="GO" id="GO:0004799">
    <property type="term" value="F:thymidylate synthase activity"/>
    <property type="evidence" value="ECO:0000314"/>
    <property type="project" value="UniProtKB"/>
</dbReference>
<dbReference type="GO" id="GO:0006231">
    <property type="term" value="P:dTMP biosynthetic process"/>
    <property type="evidence" value="ECO:0000314"/>
    <property type="project" value="UniProtKB"/>
</dbReference>
<dbReference type="GO" id="GO:0006235">
    <property type="term" value="P:dTTP biosynthetic process"/>
    <property type="evidence" value="ECO:0007669"/>
    <property type="project" value="UniProtKB-UniPathway"/>
</dbReference>
<dbReference type="GO" id="GO:0032259">
    <property type="term" value="P:methylation"/>
    <property type="evidence" value="ECO:0007669"/>
    <property type="project" value="UniProtKB-KW"/>
</dbReference>
<dbReference type="InterPro" id="IPR003745">
    <property type="entry name" value="DUF166"/>
</dbReference>
<dbReference type="Pfam" id="PF02593">
    <property type="entry name" value="DUF166"/>
    <property type="match status" value="1"/>
</dbReference>
<feature type="chain" id="PRO_0000107016" description="Thymidylate synthase">
    <location>
        <begin position="1"/>
        <end position="260"/>
    </location>
</feature>
<accession>Q58167</accession>
<name>TMPS_METJA</name>